<keyword id="KW-0012">Acyltransferase</keyword>
<keyword id="KW-1185">Reference proteome</keyword>
<keyword id="KW-0808">Transferase</keyword>
<protein>
    <recommendedName>
        <fullName evidence="6">Acyl transferase 7</fullName>
        <shortName evidence="5">OsAT7</shortName>
        <ecNumber evidence="6">2.3.1.-</ecNumber>
    </recommendedName>
</protein>
<proteinExistence type="evidence at transcript level"/>
<reference key="1">
    <citation type="journal article" date="2005" name="Mol. Genet. Genomics">
        <title>A fine physical map of the rice chromosome 5.</title>
        <authorList>
            <person name="Cheng C.-H."/>
            <person name="Chung M.C."/>
            <person name="Liu S.-M."/>
            <person name="Chen S.-K."/>
            <person name="Kao F.Y."/>
            <person name="Lin S.-J."/>
            <person name="Hsiao S.-H."/>
            <person name="Tseng I.C."/>
            <person name="Hsing Y.-I.C."/>
            <person name="Wu H.-P."/>
            <person name="Chen C.-S."/>
            <person name="Shaw J.-F."/>
            <person name="Wu J."/>
            <person name="Matsumoto T."/>
            <person name="Sasaki T."/>
            <person name="Chen H.-C."/>
            <person name="Chow T.-Y."/>
        </authorList>
    </citation>
    <scope>NUCLEOTIDE SEQUENCE [LARGE SCALE GENOMIC DNA]</scope>
    <source>
        <strain>cv. Nipponbare</strain>
    </source>
</reference>
<reference key="2">
    <citation type="journal article" date="2005" name="Nature">
        <title>The map-based sequence of the rice genome.</title>
        <authorList>
            <consortium name="International rice genome sequencing project (IRGSP)"/>
        </authorList>
    </citation>
    <scope>NUCLEOTIDE SEQUENCE [LARGE SCALE GENOMIC DNA]</scope>
    <source>
        <strain>cv. Nipponbare</strain>
    </source>
</reference>
<reference key="3">
    <citation type="journal article" date="2008" name="Nucleic Acids Res.">
        <title>The rice annotation project database (RAP-DB): 2008 update.</title>
        <authorList>
            <consortium name="The rice annotation project (RAP)"/>
        </authorList>
    </citation>
    <scope>GENOME REANNOTATION</scope>
    <source>
        <strain>cv. Nipponbare</strain>
    </source>
</reference>
<reference key="4">
    <citation type="journal article" date="2013" name="Rice">
        <title>Improvement of the Oryza sativa Nipponbare reference genome using next generation sequence and optical map data.</title>
        <authorList>
            <person name="Kawahara Y."/>
            <person name="de la Bastide M."/>
            <person name="Hamilton J.P."/>
            <person name="Kanamori H."/>
            <person name="McCombie W.R."/>
            <person name="Ouyang S."/>
            <person name="Schwartz D.C."/>
            <person name="Tanaka T."/>
            <person name="Wu J."/>
            <person name="Zhou S."/>
            <person name="Childs K.L."/>
            <person name="Davidson R.M."/>
            <person name="Lin H."/>
            <person name="Quesada-Ocampo L."/>
            <person name="Vaillancourt B."/>
            <person name="Sakai H."/>
            <person name="Lee S.S."/>
            <person name="Kim J."/>
            <person name="Numa H."/>
            <person name="Itoh T."/>
            <person name="Buell C.R."/>
            <person name="Matsumoto T."/>
        </authorList>
    </citation>
    <scope>GENOME REANNOTATION</scope>
    <source>
        <strain>cv. Nipponbare</strain>
    </source>
</reference>
<reference key="5">
    <citation type="journal article" date="2003" name="Science">
        <title>Collection, mapping, and annotation of over 28,000 cDNA clones from japonica rice.</title>
        <authorList>
            <consortium name="The rice full-length cDNA consortium"/>
        </authorList>
    </citation>
    <scope>NUCLEOTIDE SEQUENCE [LARGE SCALE MRNA]</scope>
    <source>
        <strain>cv. Nipponbare</strain>
    </source>
</reference>
<reference key="6">
    <citation type="journal article" date="2010" name="Planta">
        <title>Down-regulation of four putative arabinoxylan feruloyl transferase genes from family PF02458 reduces ester-linked ferulate content in rice cell walls.</title>
        <authorList>
            <person name="Piston F."/>
            <person name="Uauy C."/>
            <person name="Fu L."/>
            <person name="Langston J."/>
            <person name="Labavitch J."/>
            <person name="Dubcovsky J."/>
        </authorList>
    </citation>
    <scope>FUNCTION</scope>
</reference>
<reference key="7">
    <citation type="journal article" date="2013" name="Plant Physiol.">
        <title>Overexpression of a BAHD acyltransferase, OsAt10, alters rice cell wall hydroxycinnamic acid content and saccharification.</title>
        <authorList>
            <person name="Bartley L.E."/>
            <person name="Peck M.L."/>
            <person name="Kim S.R."/>
            <person name="Ebert B."/>
            <person name="Manisseri C."/>
            <person name="Chiniquy D.M."/>
            <person name="Sykes R."/>
            <person name="Gao L."/>
            <person name="Rautengarten C."/>
            <person name="Vega-Sanchez M.E."/>
            <person name="Benke P.I."/>
            <person name="Canlas P.E."/>
            <person name="Cao P."/>
            <person name="Brewer S."/>
            <person name="Lin F."/>
            <person name="Smith W.L."/>
            <person name="Zhang X."/>
            <person name="Keasling J.D."/>
            <person name="Jentoff R.E."/>
            <person name="Foster S.B."/>
            <person name="Zhou J."/>
            <person name="Ziebell A."/>
            <person name="An G."/>
            <person name="Scheller H.V."/>
            <person name="Ronald P.C."/>
        </authorList>
    </citation>
    <scope>FUNCTION</scope>
    <scope>DISRUPTION PHENOTYPE</scope>
</reference>
<name>AT7_ORYSJ</name>
<dbReference type="EC" id="2.3.1.-" evidence="6"/>
<dbReference type="EMBL" id="AC130610">
    <property type="status" value="NOT_ANNOTATED_CDS"/>
    <property type="molecule type" value="Genomic_DNA"/>
</dbReference>
<dbReference type="EMBL" id="AP008211">
    <property type="protein sequence ID" value="BAF16718.1"/>
    <property type="molecule type" value="Genomic_DNA"/>
</dbReference>
<dbReference type="EMBL" id="AP014961">
    <property type="protein sequence ID" value="BAS92547.1"/>
    <property type="molecule type" value="Genomic_DNA"/>
</dbReference>
<dbReference type="EMBL" id="AK100028">
    <property type="protein sequence ID" value="BAG94405.1"/>
    <property type="molecule type" value="mRNA"/>
</dbReference>
<dbReference type="RefSeq" id="XP_015637451.1">
    <property type="nucleotide sequence ID" value="XM_015781965.1"/>
</dbReference>
<dbReference type="SMR" id="Q0DKA5"/>
<dbReference type="PaxDb" id="39947-Q0DKA5"/>
<dbReference type="EnsemblPlants" id="Os05t0179300-01">
    <property type="protein sequence ID" value="Os05t0179300-01"/>
    <property type="gene ID" value="Os05g0179300"/>
</dbReference>
<dbReference type="Gramene" id="Os05t0179300-01">
    <property type="protein sequence ID" value="Os05t0179300-01"/>
    <property type="gene ID" value="Os05g0179300"/>
</dbReference>
<dbReference type="KEGG" id="dosa:Os05g0179300"/>
<dbReference type="eggNOG" id="ENOG502SK9M">
    <property type="taxonomic scope" value="Eukaryota"/>
</dbReference>
<dbReference type="HOGENOM" id="CLU_014546_2_0_1"/>
<dbReference type="InParanoid" id="Q0DKA5"/>
<dbReference type="OMA" id="APHRLSW"/>
<dbReference type="OrthoDB" id="444127at2759"/>
<dbReference type="Proteomes" id="UP000000763">
    <property type="component" value="Chromosome 5"/>
</dbReference>
<dbReference type="Proteomes" id="UP000059680">
    <property type="component" value="Chromosome 5"/>
</dbReference>
<dbReference type="GO" id="GO:0050734">
    <property type="term" value="F:hydroxycinnamoyltransferase activity"/>
    <property type="evidence" value="ECO:0007669"/>
    <property type="project" value="UniProtKB-ARBA"/>
</dbReference>
<dbReference type="Gene3D" id="3.30.559.10">
    <property type="entry name" value="Chloramphenicol acetyltransferase-like domain"/>
    <property type="match status" value="2"/>
</dbReference>
<dbReference type="InterPro" id="IPR023213">
    <property type="entry name" value="CAT-like_dom_sf"/>
</dbReference>
<dbReference type="InterPro" id="IPR050898">
    <property type="entry name" value="Plant_acyltransferase"/>
</dbReference>
<dbReference type="PANTHER" id="PTHR31147">
    <property type="entry name" value="ACYL TRANSFERASE 4"/>
    <property type="match status" value="1"/>
</dbReference>
<dbReference type="PANTHER" id="PTHR31147:SF3">
    <property type="entry name" value="ACYL TRANSFERASE 7"/>
    <property type="match status" value="1"/>
</dbReference>
<dbReference type="Pfam" id="PF02458">
    <property type="entry name" value="Transferase"/>
    <property type="match status" value="1"/>
</dbReference>
<organism>
    <name type="scientific">Oryza sativa subsp. japonica</name>
    <name type="common">Rice</name>
    <dbReference type="NCBI Taxonomy" id="39947"/>
    <lineage>
        <taxon>Eukaryota</taxon>
        <taxon>Viridiplantae</taxon>
        <taxon>Streptophyta</taxon>
        <taxon>Embryophyta</taxon>
        <taxon>Tracheophyta</taxon>
        <taxon>Spermatophyta</taxon>
        <taxon>Magnoliopsida</taxon>
        <taxon>Liliopsida</taxon>
        <taxon>Poales</taxon>
        <taxon>Poaceae</taxon>
        <taxon>BOP clade</taxon>
        <taxon>Oryzoideae</taxon>
        <taxon>Oryzeae</taxon>
        <taxon>Oryzinae</taxon>
        <taxon>Oryza</taxon>
        <taxon>Oryza sativa</taxon>
    </lineage>
</organism>
<sequence length="439" mass="47160">MAAAAPDKAVERLSQKLVHPSSPTPSAPLRLSWLDRYPTQMALIESLHVFKPDPARDAAGQGLAPARAIETALARALVEYYPLAGRLAVSRDSGELQVDCCGGAGGHGGVWFIEAAVPCRLEDVDYLEYPLAISKDELLPHPRPRPTRDEEDKLILLVQVTTFACGGFVVGFRFSHAVADGPGAAQFMGAVGELARGGERITVAPSWGRDAVPDPAGAMVGALPEPAGASRLEYLAIDISADYINHFKSQFAAATGGARCSAFEVLIAKAWQSRTRAAAFDPSTPINLSFAMNARPLLLPRGGAGFYGNCYYIMRVASTAGRVATASVTDVVRMIREGKKRLPSEFARWAAGEMAGVDPYQITSDYRTLLVSDWTRLGFAEVDYGWGPPGHVVPLTNLDYIATCILVKPWAHKPGARLITQCVTPDRVTAFHDAMVDIN</sequence>
<gene>
    <name evidence="5" type="primary">AT7</name>
    <name evidence="7" type="ordered locus">Os05g0179300</name>
    <name evidence="6" type="ordered locus">LOC_Os05g08640</name>
</gene>
<evidence type="ECO:0000250" key="1">
    <source>
        <dbReference type="UniProtKB" id="Q8W1W9"/>
    </source>
</evidence>
<evidence type="ECO:0000256" key="2">
    <source>
        <dbReference type="SAM" id="MobiDB-lite"/>
    </source>
</evidence>
<evidence type="ECO:0000269" key="3">
    <source>
    </source>
</evidence>
<evidence type="ECO:0000269" key="4">
    <source>
    </source>
</evidence>
<evidence type="ECO:0000303" key="5">
    <source>
    </source>
</evidence>
<evidence type="ECO:0000305" key="6"/>
<evidence type="ECO:0000312" key="7">
    <source>
        <dbReference type="EMBL" id="BAS92547.1"/>
    </source>
</evidence>
<accession>Q0DKA5</accession>
<feature type="chain" id="PRO_0000437777" description="Acyl transferase 7">
    <location>
        <begin position="1"/>
        <end position="439"/>
    </location>
</feature>
<feature type="region of interest" description="Disordered" evidence="2">
    <location>
        <begin position="1"/>
        <end position="25"/>
    </location>
</feature>
<feature type="active site" description="Proton acceptor" evidence="1">
    <location>
        <position position="176"/>
    </location>
</feature>
<feature type="active site" description="Proton acceptor" evidence="1">
    <location>
        <position position="383"/>
    </location>
</feature>
<comment type="function">
    <text evidence="3 4">Involved in the incorporation of ferulate into the cell wall. May act as arabinoxylan feruloyl transferase.</text>
</comment>
<comment type="disruption phenotype">
    <text evidence="4">No visible phenotype under normal growth conditions, but mutant plants have significant reduction of ferulate in leaf cell wall.</text>
</comment>
<comment type="similarity">
    <text evidence="6">Belongs to the plant acyltransferase family.</text>
</comment>